<feature type="chain" id="PRO_1000195607" description="Large ribosomal subunit protein uL11">
    <location>
        <begin position="1"/>
        <end position="147"/>
    </location>
</feature>
<proteinExistence type="inferred from homology"/>
<protein>
    <recommendedName>
        <fullName evidence="1">Large ribosomal subunit protein uL11</fullName>
    </recommendedName>
    <alternativeName>
        <fullName evidence="2">50S ribosomal protein L11</fullName>
    </alternativeName>
</protein>
<reference key="1">
    <citation type="journal article" date="2010" name="BMC Genomics">
        <title>Complete genome sequence and lifestyle of black-pigmented Corynebacterium aurimucosum ATCC 700975 (formerly C. nigricans CN-1) isolated from a vaginal swab of a woman with spontaneous abortion.</title>
        <authorList>
            <person name="Trost E."/>
            <person name="Gotker S."/>
            <person name="Schneider J."/>
            <person name="Schneiker-Bekel S."/>
            <person name="Szczepanowski R."/>
            <person name="Tilker A."/>
            <person name="Viehoever P."/>
            <person name="Arnold W."/>
            <person name="Bekel T."/>
            <person name="Blom J."/>
            <person name="Gartemann K.H."/>
            <person name="Linke B."/>
            <person name="Goesmann A."/>
            <person name="Puhler A."/>
            <person name="Shukla S.K."/>
            <person name="Tauch A."/>
        </authorList>
    </citation>
    <scope>NUCLEOTIDE SEQUENCE [LARGE SCALE GENOMIC DNA]</scope>
    <source>
        <strain>ATCC 700975 / DSM 44827 / CIP 107346 / CN-1</strain>
    </source>
</reference>
<comment type="function">
    <text evidence="1">Forms part of the ribosomal stalk which helps the ribosome interact with GTP-bound translation factors.</text>
</comment>
<comment type="subunit">
    <text evidence="1">Part of the ribosomal stalk of the 50S ribosomal subunit. Interacts with L10 and the large rRNA to form the base of the stalk. L10 forms an elongated spine to which L12 dimers bind in a sequential fashion forming a multimeric L10(L12)X complex.</text>
</comment>
<comment type="PTM">
    <text evidence="1">One or more lysine residues are methylated.</text>
</comment>
<comment type="similarity">
    <text evidence="1">Belongs to the universal ribosomal protein uL11 family.</text>
</comment>
<keyword id="KW-0488">Methylation</keyword>
<keyword id="KW-1185">Reference proteome</keyword>
<keyword id="KW-0687">Ribonucleoprotein</keyword>
<keyword id="KW-0689">Ribosomal protein</keyword>
<keyword id="KW-0694">RNA-binding</keyword>
<keyword id="KW-0699">rRNA-binding</keyword>
<evidence type="ECO:0000255" key="1">
    <source>
        <dbReference type="HAMAP-Rule" id="MF_00736"/>
    </source>
</evidence>
<evidence type="ECO:0000305" key="2"/>
<accession>C3PKL7</accession>
<gene>
    <name evidence="1" type="primary">rplK</name>
    <name type="ordered locus">cauri_0354</name>
</gene>
<organism>
    <name type="scientific">Corynebacterium aurimucosum (strain ATCC 700975 / DSM 44827 / CIP 107346 / CN-1)</name>
    <name type="common">Corynebacterium nigricans</name>
    <dbReference type="NCBI Taxonomy" id="548476"/>
    <lineage>
        <taxon>Bacteria</taxon>
        <taxon>Bacillati</taxon>
        <taxon>Actinomycetota</taxon>
        <taxon>Actinomycetes</taxon>
        <taxon>Mycobacteriales</taxon>
        <taxon>Corynebacteriaceae</taxon>
        <taxon>Corynebacterium</taxon>
    </lineage>
</organism>
<name>RL11_CORA7</name>
<sequence length="147" mass="15496">MAPKKKVTGLIKLQIEAGAANPAPPVGPALGAHGVNIMEFCKAYNAATESQRGNVVPVEITVYEDRSFDFKLKTPPAAKLLLKAAGIKKGSGVPHTDKVGSVTWDQCKEIAQTKFEDLNARDIENGARIIAGTARSMGITVDGVPAK</sequence>
<dbReference type="EMBL" id="CP001601">
    <property type="protein sequence ID" value="ACP31953.1"/>
    <property type="molecule type" value="Genomic_DNA"/>
</dbReference>
<dbReference type="RefSeq" id="WP_010189723.1">
    <property type="nucleotide sequence ID" value="NZ_ACLH01000069.1"/>
</dbReference>
<dbReference type="SMR" id="C3PKL7"/>
<dbReference type="STRING" id="548476.cauri_0354"/>
<dbReference type="GeneID" id="70784047"/>
<dbReference type="KEGG" id="car:cauri_0354"/>
<dbReference type="eggNOG" id="COG0080">
    <property type="taxonomic scope" value="Bacteria"/>
</dbReference>
<dbReference type="HOGENOM" id="CLU_074237_2_1_11"/>
<dbReference type="OrthoDB" id="9802408at2"/>
<dbReference type="Proteomes" id="UP000002077">
    <property type="component" value="Chromosome"/>
</dbReference>
<dbReference type="GO" id="GO:0022625">
    <property type="term" value="C:cytosolic large ribosomal subunit"/>
    <property type="evidence" value="ECO:0007669"/>
    <property type="project" value="TreeGrafter"/>
</dbReference>
<dbReference type="GO" id="GO:0070180">
    <property type="term" value="F:large ribosomal subunit rRNA binding"/>
    <property type="evidence" value="ECO:0007669"/>
    <property type="project" value="UniProtKB-UniRule"/>
</dbReference>
<dbReference type="GO" id="GO:0003735">
    <property type="term" value="F:structural constituent of ribosome"/>
    <property type="evidence" value="ECO:0007669"/>
    <property type="project" value="InterPro"/>
</dbReference>
<dbReference type="GO" id="GO:0006412">
    <property type="term" value="P:translation"/>
    <property type="evidence" value="ECO:0007669"/>
    <property type="project" value="UniProtKB-UniRule"/>
</dbReference>
<dbReference type="CDD" id="cd00349">
    <property type="entry name" value="Ribosomal_L11"/>
    <property type="match status" value="1"/>
</dbReference>
<dbReference type="FunFam" id="1.10.10.250:FF:000001">
    <property type="entry name" value="50S ribosomal protein L11"/>
    <property type="match status" value="1"/>
</dbReference>
<dbReference type="FunFam" id="3.30.1550.10:FF:000001">
    <property type="entry name" value="50S ribosomal protein L11"/>
    <property type="match status" value="1"/>
</dbReference>
<dbReference type="Gene3D" id="1.10.10.250">
    <property type="entry name" value="Ribosomal protein L11, C-terminal domain"/>
    <property type="match status" value="1"/>
</dbReference>
<dbReference type="Gene3D" id="3.30.1550.10">
    <property type="entry name" value="Ribosomal protein L11/L12, N-terminal domain"/>
    <property type="match status" value="1"/>
</dbReference>
<dbReference type="HAMAP" id="MF_00736">
    <property type="entry name" value="Ribosomal_uL11"/>
    <property type="match status" value="1"/>
</dbReference>
<dbReference type="InterPro" id="IPR000911">
    <property type="entry name" value="Ribosomal_uL11"/>
</dbReference>
<dbReference type="InterPro" id="IPR006519">
    <property type="entry name" value="Ribosomal_uL11_bac-typ"/>
</dbReference>
<dbReference type="InterPro" id="IPR020783">
    <property type="entry name" value="Ribosomal_uL11_C"/>
</dbReference>
<dbReference type="InterPro" id="IPR036769">
    <property type="entry name" value="Ribosomal_uL11_C_sf"/>
</dbReference>
<dbReference type="InterPro" id="IPR020785">
    <property type="entry name" value="Ribosomal_uL11_CS"/>
</dbReference>
<dbReference type="InterPro" id="IPR020784">
    <property type="entry name" value="Ribosomal_uL11_N"/>
</dbReference>
<dbReference type="InterPro" id="IPR036796">
    <property type="entry name" value="Ribosomal_uL11_N_sf"/>
</dbReference>
<dbReference type="NCBIfam" id="TIGR01632">
    <property type="entry name" value="L11_bact"/>
    <property type="match status" value="1"/>
</dbReference>
<dbReference type="PANTHER" id="PTHR11661">
    <property type="entry name" value="60S RIBOSOMAL PROTEIN L12"/>
    <property type="match status" value="1"/>
</dbReference>
<dbReference type="PANTHER" id="PTHR11661:SF1">
    <property type="entry name" value="LARGE RIBOSOMAL SUBUNIT PROTEIN UL11M"/>
    <property type="match status" value="1"/>
</dbReference>
<dbReference type="Pfam" id="PF00298">
    <property type="entry name" value="Ribosomal_L11"/>
    <property type="match status" value="1"/>
</dbReference>
<dbReference type="Pfam" id="PF03946">
    <property type="entry name" value="Ribosomal_L11_N"/>
    <property type="match status" value="1"/>
</dbReference>
<dbReference type="SMART" id="SM00649">
    <property type="entry name" value="RL11"/>
    <property type="match status" value="1"/>
</dbReference>
<dbReference type="SUPFAM" id="SSF54747">
    <property type="entry name" value="Ribosomal L11/L12e N-terminal domain"/>
    <property type="match status" value="1"/>
</dbReference>
<dbReference type="SUPFAM" id="SSF46906">
    <property type="entry name" value="Ribosomal protein L11, C-terminal domain"/>
    <property type="match status" value="1"/>
</dbReference>
<dbReference type="PROSITE" id="PS00359">
    <property type="entry name" value="RIBOSOMAL_L11"/>
    <property type="match status" value="1"/>
</dbReference>